<protein>
    <recommendedName>
        <fullName evidence="1">Adenylate kinase</fullName>
        <shortName evidence="1">AK</shortName>
        <ecNumber evidence="1">2.7.4.3</ecNumber>
    </recommendedName>
    <alternativeName>
        <fullName evidence="1">ATP-AMP transphosphorylase</fullName>
    </alternativeName>
    <alternativeName>
        <fullName evidence="1">ATP:AMP phosphotransferase</fullName>
    </alternativeName>
    <alternativeName>
        <fullName evidence="1">Adenylate monophosphate kinase</fullName>
    </alternativeName>
</protein>
<evidence type="ECO:0000255" key="1">
    <source>
        <dbReference type="HAMAP-Rule" id="MF_00235"/>
    </source>
</evidence>
<gene>
    <name evidence="1" type="primary">adk</name>
    <name type="ordered locus">SeSA_A0550</name>
</gene>
<proteinExistence type="inferred from homology"/>
<feature type="chain" id="PRO_1000100607" description="Adenylate kinase">
    <location>
        <begin position="1"/>
        <end position="214"/>
    </location>
</feature>
<feature type="region of interest" description="NMP" evidence="1">
    <location>
        <begin position="30"/>
        <end position="59"/>
    </location>
</feature>
<feature type="region of interest" description="LID">
    <location>
        <begin position="122"/>
        <end position="159"/>
    </location>
</feature>
<feature type="binding site" evidence="1">
    <location>
        <begin position="10"/>
        <end position="15"/>
    </location>
    <ligand>
        <name>ATP</name>
        <dbReference type="ChEBI" id="CHEBI:30616"/>
    </ligand>
</feature>
<feature type="binding site" evidence="1">
    <location>
        <position position="31"/>
    </location>
    <ligand>
        <name>AMP</name>
        <dbReference type="ChEBI" id="CHEBI:456215"/>
    </ligand>
</feature>
<feature type="binding site" evidence="1">
    <location>
        <position position="36"/>
    </location>
    <ligand>
        <name>AMP</name>
        <dbReference type="ChEBI" id="CHEBI:456215"/>
    </ligand>
</feature>
<feature type="binding site" evidence="1">
    <location>
        <begin position="57"/>
        <end position="59"/>
    </location>
    <ligand>
        <name>AMP</name>
        <dbReference type="ChEBI" id="CHEBI:456215"/>
    </ligand>
</feature>
<feature type="binding site" evidence="1">
    <location>
        <begin position="85"/>
        <end position="88"/>
    </location>
    <ligand>
        <name>AMP</name>
        <dbReference type="ChEBI" id="CHEBI:456215"/>
    </ligand>
</feature>
<feature type="binding site" evidence="1">
    <location>
        <position position="92"/>
    </location>
    <ligand>
        <name>AMP</name>
        <dbReference type="ChEBI" id="CHEBI:456215"/>
    </ligand>
</feature>
<feature type="binding site" evidence="1">
    <location>
        <position position="123"/>
    </location>
    <ligand>
        <name>ATP</name>
        <dbReference type="ChEBI" id="CHEBI:30616"/>
    </ligand>
</feature>
<feature type="binding site" evidence="1">
    <location>
        <begin position="132"/>
        <end position="133"/>
    </location>
    <ligand>
        <name>ATP</name>
        <dbReference type="ChEBI" id="CHEBI:30616"/>
    </ligand>
</feature>
<feature type="binding site" evidence="1">
    <location>
        <position position="156"/>
    </location>
    <ligand>
        <name>AMP</name>
        <dbReference type="ChEBI" id="CHEBI:456215"/>
    </ligand>
</feature>
<feature type="binding site" evidence="1">
    <location>
        <position position="167"/>
    </location>
    <ligand>
        <name>AMP</name>
        <dbReference type="ChEBI" id="CHEBI:456215"/>
    </ligand>
</feature>
<feature type="binding site" evidence="1">
    <location>
        <position position="200"/>
    </location>
    <ligand>
        <name>ATP</name>
        <dbReference type="ChEBI" id="CHEBI:30616"/>
    </ligand>
</feature>
<sequence length="214" mass="23488">MRIILLGAPGAGKGTQAQFIMEKYGIPQISTGDMLRAAVKSGSELGKQAKDIMDAGKLVTDELVIALVKERIAQEDCRNGFLLDGFPRTIPQADAMKEAGIVVDYVLEFDVPDELIVDRIVGRRVHAASGRVYHVKFNPPKVEGKDDVTGEDLTTRKDDQEETVRKRLVEYHQMTAPLIGYYQKEAEAGNTKYAKVDGTQAVADVRAALEKILG</sequence>
<comment type="function">
    <text evidence="1">Catalyzes the reversible transfer of the terminal phosphate group between ATP and AMP. Plays an important role in cellular energy homeostasis and in adenine nucleotide metabolism.</text>
</comment>
<comment type="catalytic activity">
    <reaction evidence="1">
        <text>AMP + ATP = 2 ADP</text>
        <dbReference type="Rhea" id="RHEA:12973"/>
        <dbReference type="ChEBI" id="CHEBI:30616"/>
        <dbReference type="ChEBI" id="CHEBI:456215"/>
        <dbReference type="ChEBI" id="CHEBI:456216"/>
        <dbReference type="EC" id="2.7.4.3"/>
    </reaction>
</comment>
<comment type="pathway">
    <text evidence="1">Purine metabolism; AMP biosynthesis via salvage pathway; AMP from ADP: step 1/1.</text>
</comment>
<comment type="subunit">
    <text evidence="1">Monomer.</text>
</comment>
<comment type="subcellular location">
    <subcellularLocation>
        <location evidence="1">Cytoplasm</location>
    </subcellularLocation>
</comment>
<comment type="domain">
    <text evidence="1">Consists of three domains, a large central CORE domain and two small peripheral domains, NMPbind and LID, which undergo movements during catalysis. The LID domain closes over the site of phosphoryl transfer upon ATP binding. Assembling and dissambling the active center during each catalytic cycle provides an effective means to prevent ATP hydrolysis.</text>
</comment>
<comment type="similarity">
    <text evidence="1">Belongs to the adenylate kinase family.</text>
</comment>
<organism>
    <name type="scientific">Salmonella schwarzengrund (strain CVM19633)</name>
    <dbReference type="NCBI Taxonomy" id="439843"/>
    <lineage>
        <taxon>Bacteria</taxon>
        <taxon>Pseudomonadati</taxon>
        <taxon>Pseudomonadota</taxon>
        <taxon>Gammaproteobacteria</taxon>
        <taxon>Enterobacterales</taxon>
        <taxon>Enterobacteriaceae</taxon>
        <taxon>Salmonella</taxon>
    </lineage>
</organism>
<reference key="1">
    <citation type="journal article" date="2011" name="J. Bacteriol.">
        <title>Comparative genomics of 28 Salmonella enterica isolates: evidence for CRISPR-mediated adaptive sublineage evolution.</title>
        <authorList>
            <person name="Fricke W.F."/>
            <person name="Mammel M.K."/>
            <person name="McDermott P.F."/>
            <person name="Tartera C."/>
            <person name="White D.G."/>
            <person name="Leclerc J.E."/>
            <person name="Ravel J."/>
            <person name="Cebula T.A."/>
        </authorList>
    </citation>
    <scope>NUCLEOTIDE SEQUENCE [LARGE SCALE GENOMIC DNA]</scope>
    <source>
        <strain>CVM19633</strain>
    </source>
</reference>
<keyword id="KW-0067">ATP-binding</keyword>
<keyword id="KW-0963">Cytoplasm</keyword>
<keyword id="KW-0418">Kinase</keyword>
<keyword id="KW-0545">Nucleotide biosynthesis</keyword>
<keyword id="KW-0547">Nucleotide-binding</keyword>
<keyword id="KW-0808">Transferase</keyword>
<accession>B4TMG6</accession>
<dbReference type="EC" id="2.7.4.3" evidence="1"/>
<dbReference type="EMBL" id="CP001127">
    <property type="protein sequence ID" value="ACF92124.1"/>
    <property type="molecule type" value="Genomic_DNA"/>
</dbReference>
<dbReference type="RefSeq" id="WP_001220237.1">
    <property type="nucleotide sequence ID" value="NC_011094.1"/>
</dbReference>
<dbReference type="SMR" id="B4TMG6"/>
<dbReference type="KEGG" id="sew:SeSA_A0550"/>
<dbReference type="HOGENOM" id="CLU_032354_1_2_6"/>
<dbReference type="UniPathway" id="UPA00588">
    <property type="reaction ID" value="UER00649"/>
</dbReference>
<dbReference type="Proteomes" id="UP000001865">
    <property type="component" value="Chromosome"/>
</dbReference>
<dbReference type="GO" id="GO:0005737">
    <property type="term" value="C:cytoplasm"/>
    <property type="evidence" value="ECO:0007669"/>
    <property type="project" value="UniProtKB-SubCell"/>
</dbReference>
<dbReference type="GO" id="GO:0004017">
    <property type="term" value="F:adenylate kinase activity"/>
    <property type="evidence" value="ECO:0007669"/>
    <property type="project" value="UniProtKB-UniRule"/>
</dbReference>
<dbReference type="GO" id="GO:0005524">
    <property type="term" value="F:ATP binding"/>
    <property type="evidence" value="ECO:0007669"/>
    <property type="project" value="UniProtKB-UniRule"/>
</dbReference>
<dbReference type="GO" id="GO:0044209">
    <property type="term" value="P:AMP salvage"/>
    <property type="evidence" value="ECO:0007669"/>
    <property type="project" value="UniProtKB-UniRule"/>
</dbReference>
<dbReference type="CDD" id="cd01428">
    <property type="entry name" value="ADK"/>
    <property type="match status" value="1"/>
</dbReference>
<dbReference type="FunFam" id="3.40.50.300:FF:000106">
    <property type="entry name" value="Adenylate kinase mitochondrial"/>
    <property type="match status" value="1"/>
</dbReference>
<dbReference type="Gene3D" id="3.40.50.300">
    <property type="entry name" value="P-loop containing nucleotide triphosphate hydrolases"/>
    <property type="match status" value="1"/>
</dbReference>
<dbReference type="HAMAP" id="MF_00235">
    <property type="entry name" value="Adenylate_kinase_Adk"/>
    <property type="match status" value="1"/>
</dbReference>
<dbReference type="InterPro" id="IPR006259">
    <property type="entry name" value="Adenyl_kin_sub"/>
</dbReference>
<dbReference type="InterPro" id="IPR000850">
    <property type="entry name" value="Adenylat/UMP-CMP_kin"/>
</dbReference>
<dbReference type="InterPro" id="IPR033690">
    <property type="entry name" value="Adenylat_kinase_CS"/>
</dbReference>
<dbReference type="InterPro" id="IPR007862">
    <property type="entry name" value="Adenylate_kinase_lid-dom"/>
</dbReference>
<dbReference type="InterPro" id="IPR027417">
    <property type="entry name" value="P-loop_NTPase"/>
</dbReference>
<dbReference type="NCBIfam" id="TIGR01351">
    <property type="entry name" value="adk"/>
    <property type="match status" value="1"/>
</dbReference>
<dbReference type="NCBIfam" id="NF001379">
    <property type="entry name" value="PRK00279.1-1"/>
    <property type="match status" value="1"/>
</dbReference>
<dbReference type="NCBIfam" id="NF001380">
    <property type="entry name" value="PRK00279.1-2"/>
    <property type="match status" value="1"/>
</dbReference>
<dbReference type="NCBIfam" id="NF001381">
    <property type="entry name" value="PRK00279.1-3"/>
    <property type="match status" value="1"/>
</dbReference>
<dbReference type="NCBIfam" id="NF011100">
    <property type="entry name" value="PRK14527.1"/>
    <property type="match status" value="1"/>
</dbReference>
<dbReference type="PANTHER" id="PTHR23359">
    <property type="entry name" value="NUCLEOTIDE KINASE"/>
    <property type="match status" value="1"/>
</dbReference>
<dbReference type="Pfam" id="PF00406">
    <property type="entry name" value="ADK"/>
    <property type="match status" value="1"/>
</dbReference>
<dbReference type="Pfam" id="PF05191">
    <property type="entry name" value="ADK_lid"/>
    <property type="match status" value="1"/>
</dbReference>
<dbReference type="PRINTS" id="PR00094">
    <property type="entry name" value="ADENYLTKNASE"/>
</dbReference>
<dbReference type="SUPFAM" id="SSF52540">
    <property type="entry name" value="P-loop containing nucleoside triphosphate hydrolases"/>
    <property type="match status" value="1"/>
</dbReference>
<dbReference type="PROSITE" id="PS00113">
    <property type="entry name" value="ADENYLATE_KINASE"/>
    <property type="match status" value="1"/>
</dbReference>
<name>KAD_SALSV</name>